<name>NSP4_ROTH7</name>
<evidence type="ECO:0000255" key="1">
    <source>
        <dbReference type="HAMAP-Rule" id="MF_04091"/>
    </source>
</evidence>
<organismHost>
    <name type="scientific">Homo sapiens</name>
    <name type="common">Human</name>
    <dbReference type="NCBI Taxonomy" id="9606"/>
</organismHost>
<organism>
    <name type="scientific">Rotavirus A (isolate RVA/Human/United Kingdom/A64/1987/G10P11[14])</name>
    <name type="common">RV-A</name>
    <dbReference type="NCBI Taxonomy" id="578827"/>
    <lineage>
        <taxon>Viruses</taxon>
        <taxon>Riboviria</taxon>
        <taxon>Orthornavirae</taxon>
        <taxon>Duplornaviricota</taxon>
        <taxon>Resentoviricetes</taxon>
        <taxon>Reovirales</taxon>
        <taxon>Sedoreoviridae</taxon>
        <taxon>Rotavirus</taxon>
        <taxon>Rotavirus A</taxon>
    </lineage>
</organism>
<sequence>MEKLTVLNYTLNVITLMNSTLHTILEDPGMAYFPYIASVLTVLFTLHRASIPTMKIALKTSKCSYKVVKYCIVTIFNTLLKLADYKEQITTKDEIEKQMDRVAKEMRRQLEMIDKLTTREIEQVKLLKRIYDKLMVRATDGIDMTKEINQKNVKTLEEWKSGKNPYEPKEVTAAM</sequence>
<keyword id="KW-1072">Activation of host autophagy by virus</keyword>
<keyword id="KW-0106">Calcium</keyword>
<keyword id="KW-0260">Enterotoxin</keyword>
<keyword id="KW-0325">Glycoprotein</keyword>
<keyword id="KW-1038">Host endoplasmic reticulum</keyword>
<keyword id="KW-1043">Host membrane</keyword>
<keyword id="KW-0945">Host-virus interaction</keyword>
<keyword id="KW-0407">Ion channel</keyword>
<keyword id="KW-0406">Ion transport</keyword>
<keyword id="KW-0472">Membrane</keyword>
<keyword id="KW-0479">Metal-binding</keyword>
<keyword id="KW-0964">Secreted</keyword>
<keyword id="KW-0735">Signal-anchor</keyword>
<keyword id="KW-0800">Toxin</keyword>
<keyword id="KW-0812">Transmembrane</keyword>
<keyword id="KW-1133">Transmembrane helix</keyword>
<keyword id="KW-0813">Transport</keyword>
<keyword id="KW-1182">Viral ion channel</keyword>
<keyword id="KW-0843">Virulence</keyword>
<dbReference type="EMBL" id="D10772">
    <property type="protein sequence ID" value="BAA01603.1"/>
    <property type="molecule type" value="Genomic_RNA"/>
</dbReference>
<dbReference type="EMBL" id="EF672568">
    <property type="protein sequence ID" value="ABV53241.1"/>
    <property type="molecule type" value="Genomic_RNA"/>
</dbReference>
<dbReference type="PIR" id="JQ1450">
    <property type="entry name" value="VGXR66"/>
</dbReference>
<dbReference type="PIR" id="JS0679">
    <property type="entry name" value="VGXR62"/>
</dbReference>
<dbReference type="SMR" id="P30031"/>
<dbReference type="Proteomes" id="UP000001456">
    <property type="component" value="Genome"/>
</dbReference>
<dbReference type="GO" id="GO:0005576">
    <property type="term" value="C:extracellular region"/>
    <property type="evidence" value="ECO:0007669"/>
    <property type="project" value="UniProtKB-SubCell"/>
</dbReference>
<dbReference type="GO" id="GO:0044155">
    <property type="term" value="C:host caveola"/>
    <property type="evidence" value="ECO:0007669"/>
    <property type="project" value="UniProtKB-SubCell"/>
</dbReference>
<dbReference type="GO" id="GO:0044169">
    <property type="term" value="C:host cell rough endoplasmic reticulum membrane"/>
    <property type="evidence" value="ECO:0007669"/>
    <property type="project" value="UniProtKB-SubCell"/>
</dbReference>
<dbReference type="GO" id="GO:0016020">
    <property type="term" value="C:membrane"/>
    <property type="evidence" value="ECO:0007669"/>
    <property type="project" value="UniProtKB-UniRule"/>
</dbReference>
<dbReference type="GO" id="GO:0015267">
    <property type="term" value="F:channel activity"/>
    <property type="evidence" value="ECO:0007669"/>
    <property type="project" value="UniProtKB-KW"/>
</dbReference>
<dbReference type="GO" id="GO:0046872">
    <property type="term" value="F:metal ion binding"/>
    <property type="evidence" value="ECO:0007669"/>
    <property type="project" value="UniProtKB-UniRule"/>
</dbReference>
<dbReference type="GO" id="GO:0090729">
    <property type="term" value="F:toxin activity"/>
    <property type="evidence" value="ECO:0007669"/>
    <property type="project" value="UniProtKB-UniRule"/>
</dbReference>
<dbReference type="GO" id="GO:0034220">
    <property type="term" value="P:monoatomic ion transmembrane transport"/>
    <property type="evidence" value="ECO:0007669"/>
    <property type="project" value="UniProtKB-KW"/>
</dbReference>
<dbReference type="GO" id="GO:0039520">
    <property type="term" value="P:symbiont-mediated activation of host autophagy"/>
    <property type="evidence" value="ECO:0007669"/>
    <property type="project" value="UniProtKB-KW"/>
</dbReference>
<dbReference type="GO" id="GO:0016032">
    <property type="term" value="P:viral process"/>
    <property type="evidence" value="ECO:0007669"/>
    <property type="project" value="UniProtKB-UniRule"/>
</dbReference>
<dbReference type="Gene3D" id="1.20.5.430">
    <property type="match status" value="1"/>
</dbReference>
<dbReference type="HAMAP" id="MF_04091">
    <property type="entry name" value="ROTA_NSP4"/>
    <property type="match status" value="1"/>
</dbReference>
<dbReference type="InterPro" id="IPR002107">
    <property type="entry name" value="Rotavirus_NSP4"/>
</dbReference>
<dbReference type="Pfam" id="PF01452">
    <property type="entry name" value="Rota_NSP4"/>
    <property type="match status" value="1"/>
</dbReference>
<dbReference type="SUPFAM" id="SSF58030">
    <property type="entry name" value="Rotavirus nonstructural proteins"/>
    <property type="match status" value="1"/>
</dbReference>
<feature type="chain" id="PRO_0000149625" description="Non-structural glycoprotein 4">
    <location>
        <begin position="1"/>
        <end position="175"/>
    </location>
</feature>
<feature type="topological domain" description="Lumenal" evidence="1">
    <location>
        <begin position="1"/>
        <end position="28"/>
    </location>
</feature>
<feature type="transmembrane region" description="Helical; Signal-anchor for type III membrane protein" evidence="1">
    <location>
        <begin position="29"/>
        <end position="51"/>
    </location>
</feature>
<feature type="topological domain" description="Cytoplasmic" evidence="1">
    <location>
        <begin position="52"/>
        <end position="175"/>
    </location>
</feature>
<feature type="binding site" evidence="1">
    <location>
        <position position="120"/>
    </location>
    <ligand>
        <name>Ca(2+)</name>
        <dbReference type="ChEBI" id="CHEBI:29108"/>
    </ligand>
</feature>
<feature type="binding site" evidence="1">
    <location>
        <position position="123"/>
    </location>
    <ligand>
        <name>Ca(2+)</name>
        <dbReference type="ChEBI" id="CHEBI:29108"/>
    </ligand>
</feature>
<feature type="glycosylation site" description="N-linked (GlcNAc...) asparagine; by host" evidence="1">
    <location>
        <position position="8"/>
    </location>
</feature>
<feature type="glycosylation site" description="N-linked (GlcNAc...) asparagine; by host" evidence="1">
    <location>
        <position position="18"/>
    </location>
</feature>
<feature type="sequence variant" description="In strain: Isolate 6.">
    <original>V</original>
    <variation>D</variation>
    <location>
        <position position="6"/>
    </location>
</feature>
<feature type="sequence variant" description="In strain: Isolate 6.">
    <original>R</original>
    <variation>K</variation>
    <location>
        <position position="48"/>
    </location>
</feature>
<feature type="sequence variant" description="In strain: Isolate 6.">
    <original>D</original>
    <variation>G</variation>
    <location>
        <position position="84"/>
    </location>
</feature>
<feature type="sequence variant" description="In strain: Isolate 6.">
    <original>A</original>
    <variation>V</variation>
    <location>
        <position position="103"/>
    </location>
</feature>
<feature type="sequence variant" description="In strain: Isolate 6.">
    <original>K</original>
    <variation>E</variation>
    <location>
        <position position="125"/>
    </location>
</feature>
<feature type="sequence variant" description="In strain: Isolate 6.">
    <original>K</original>
    <variation>E</variation>
    <location>
        <position position="160"/>
    </location>
</feature>
<reference key="1">
    <citation type="journal article" date="1992" name="J. Gen. Virol.">
        <title>Nucleotide sequences of normal and rearranged RNA segments 10 of human rotaviruses.</title>
        <authorList>
            <person name="Ballard A."/>
            <person name="McCrae M.A."/>
            <person name="Desselberger U."/>
        </authorList>
    </citation>
    <scope>NUCLEOTIDE SEQUENCE [GENOMIC RNA]</scope>
    <source>
        <strain>Isolate 2</strain>
        <strain>Isolate 6</strain>
    </source>
</reference>
<reference key="2">
    <citation type="journal article" date="2008" name="J. Virol.">
        <title>Group A human rotavirus genomics: evidence that gene constellations are influenced by viral protein interactions.</title>
        <authorList>
            <person name="Heiman E.M."/>
            <person name="McDonald S.M."/>
            <person name="Barro M."/>
            <person name="Taraporewala Z.F."/>
            <person name="Bar-Magen T."/>
            <person name="Patton J.T."/>
        </authorList>
    </citation>
    <scope>NUCLEOTIDE SEQUENCE [GENOMIC RNA]</scope>
</reference>
<comment type="function">
    <text evidence="1">Plays an essential role in the virus replication cycle by acting as a viroporin. Creates a pore in the host endoplasmic reticulum and as a consequence releases Ca(2+) in the cytoplasm of infected cell. In turn, high levels of cytoplasmic calcium trigger membrane trafficking and transport of viral ER-associated proteins to viroplasms, sites of viral genome replication and immature particle assembly.</text>
</comment>
<comment type="function">
    <text evidence="1">The secreted form acts as an enterotoxin that causes phospholipase C-dependent elevation of the intracellular calcium concentration in host intestinal mucosa cells. Increased concentration of intracellular calcium disrupts the cytoskeleton and the tight junctions, raising the paracellular permeability. Potentiates chloride ion secretion through a calcium ion-dependent signaling pathway, inducing age-dependent diarrhea. To perform this enterotoxigenic role in vivo, NSP4 is released from infected enterocytes in a soluble form capable of diffusing within the intestinal lumen and interacting with host plasma membrane receptors on neighboring epithelial cells such as integrins ITGA1/ITGB1 and ITGA2/ITGB1.</text>
</comment>
<comment type="subunit">
    <text evidence="1">Homotetramer. Interacts with the immature particle in the viroplasm. Interacts with host CAV1, early and late in infection. Interacts with host integrin ITGA1/ITGB1 heterodimer. Interacts with host integrin ITGA2/ITGB1 heterodimer. Interaction with microtubules blocks trafficking to the Golgi apparatus.</text>
</comment>
<comment type="subcellular location">
    <subcellularLocation>
        <location evidence="1">Host rough endoplasmic reticulum membrane</location>
        <topology evidence="1">Single-pass type III membrane protein</topology>
    </subcellularLocation>
    <subcellularLocation>
        <location evidence="1">Host membrane</location>
        <location evidence="1">Host caveola</location>
        <topology evidence="1">Single-pass type III membrane protein</topology>
    </subcellularLocation>
    <subcellularLocation>
        <location evidence="1">Secreted</location>
    </subcellularLocation>
    <text evidence="1">NSP4 also localizes in vesicular structures which contain autophagosomal markers and associate with viroplasms in virus-infected cells. Additionally, a soluble form of glycosylated NSP4 is secreted despite retention of its transmembrane domain.</text>
</comment>
<comment type="domain">
    <text evidence="1">Binds 1 calcium ion per tetramer.</text>
</comment>
<comment type="PTM">
    <text evidence="1">The N-glycosyl content is primarily Man(9)GlcNAc, with a small amount of Man(8)GlcNAc.</text>
</comment>
<comment type="similarity">
    <text evidence="1">Belongs to the rotavirus NSP4 family.</text>
</comment>
<proteinExistence type="inferred from homology"/>
<accession>P30031</accession>
<accession>B3SRR6</accession>
<accession>P30032</accession>
<protein>
    <recommendedName>
        <fullName evidence="1">Non-structural glycoprotein 4</fullName>
        <shortName evidence="1">NSP4</shortName>
    </recommendedName>
    <alternativeName>
        <fullName evidence="1">NCVP5</fullName>
    </alternativeName>
    <alternativeName>
        <fullName evidence="1">NS28</fullName>
    </alternativeName>
</protein>